<feature type="chain" id="PRO_0000263444" description="Elongation factor G">
    <location>
        <begin position="1"/>
        <end position="701"/>
    </location>
</feature>
<feature type="domain" description="tr-type G">
    <location>
        <begin position="6"/>
        <end position="286"/>
    </location>
</feature>
<feature type="binding site" evidence="1">
    <location>
        <begin position="15"/>
        <end position="22"/>
    </location>
    <ligand>
        <name>GTP</name>
        <dbReference type="ChEBI" id="CHEBI:37565"/>
    </ligand>
</feature>
<feature type="binding site" evidence="1">
    <location>
        <begin position="83"/>
        <end position="87"/>
    </location>
    <ligand>
        <name>GTP</name>
        <dbReference type="ChEBI" id="CHEBI:37565"/>
    </ligand>
</feature>
<feature type="binding site" evidence="1">
    <location>
        <begin position="137"/>
        <end position="140"/>
    </location>
    <ligand>
        <name>GTP</name>
        <dbReference type="ChEBI" id="CHEBI:37565"/>
    </ligand>
</feature>
<protein>
    <recommendedName>
        <fullName evidence="1">Elongation factor G</fullName>
        <shortName evidence="1">EF-G</shortName>
    </recommendedName>
</protein>
<name>EFG_CYTH3</name>
<organism>
    <name type="scientific">Cytophaga hutchinsonii (strain ATCC 33406 / DSM 1761 / CIP 103989 / NBRC 15051 / NCIMB 9469 / D465)</name>
    <dbReference type="NCBI Taxonomy" id="269798"/>
    <lineage>
        <taxon>Bacteria</taxon>
        <taxon>Pseudomonadati</taxon>
        <taxon>Bacteroidota</taxon>
        <taxon>Cytophagia</taxon>
        <taxon>Cytophagales</taxon>
        <taxon>Cytophagaceae</taxon>
        <taxon>Cytophaga</taxon>
    </lineage>
</organism>
<proteinExistence type="inferred from homology"/>
<keyword id="KW-0963">Cytoplasm</keyword>
<keyword id="KW-0251">Elongation factor</keyword>
<keyword id="KW-0342">GTP-binding</keyword>
<keyword id="KW-0547">Nucleotide-binding</keyword>
<keyword id="KW-0648">Protein biosynthesis</keyword>
<keyword id="KW-1185">Reference proteome</keyword>
<dbReference type="EMBL" id="CP000383">
    <property type="protein sequence ID" value="ABG60404.1"/>
    <property type="molecule type" value="Genomic_DNA"/>
</dbReference>
<dbReference type="RefSeq" id="WP_011586513.1">
    <property type="nucleotide sequence ID" value="NC_008255.1"/>
</dbReference>
<dbReference type="SMR" id="Q11QB0"/>
<dbReference type="STRING" id="269798.CHU_3164"/>
<dbReference type="KEGG" id="chu:CHU_3164"/>
<dbReference type="eggNOG" id="COG0480">
    <property type="taxonomic scope" value="Bacteria"/>
</dbReference>
<dbReference type="HOGENOM" id="CLU_002794_4_1_10"/>
<dbReference type="OrthoDB" id="9801591at2"/>
<dbReference type="Proteomes" id="UP000001822">
    <property type="component" value="Chromosome"/>
</dbReference>
<dbReference type="GO" id="GO:0005737">
    <property type="term" value="C:cytoplasm"/>
    <property type="evidence" value="ECO:0007669"/>
    <property type="project" value="UniProtKB-SubCell"/>
</dbReference>
<dbReference type="GO" id="GO:0005525">
    <property type="term" value="F:GTP binding"/>
    <property type="evidence" value="ECO:0007669"/>
    <property type="project" value="UniProtKB-UniRule"/>
</dbReference>
<dbReference type="GO" id="GO:0003924">
    <property type="term" value="F:GTPase activity"/>
    <property type="evidence" value="ECO:0007669"/>
    <property type="project" value="InterPro"/>
</dbReference>
<dbReference type="GO" id="GO:0003746">
    <property type="term" value="F:translation elongation factor activity"/>
    <property type="evidence" value="ECO:0007669"/>
    <property type="project" value="UniProtKB-UniRule"/>
</dbReference>
<dbReference type="GO" id="GO:0032790">
    <property type="term" value="P:ribosome disassembly"/>
    <property type="evidence" value="ECO:0007669"/>
    <property type="project" value="TreeGrafter"/>
</dbReference>
<dbReference type="CDD" id="cd01886">
    <property type="entry name" value="EF-G"/>
    <property type="match status" value="1"/>
</dbReference>
<dbReference type="CDD" id="cd16262">
    <property type="entry name" value="EFG_III"/>
    <property type="match status" value="1"/>
</dbReference>
<dbReference type="CDD" id="cd01434">
    <property type="entry name" value="EFG_mtEFG1_IV"/>
    <property type="match status" value="1"/>
</dbReference>
<dbReference type="CDD" id="cd03713">
    <property type="entry name" value="EFG_mtEFG_C"/>
    <property type="match status" value="1"/>
</dbReference>
<dbReference type="CDD" id="cd04088">
    <property type="entry name" value="EFG_mtEFG_II"/>
    <property type="match status" value="1"/>
</dbReference>
<dbReference type="FunFam" id="2.40.30.10:FF:000006">
    <property type="entry name" value="Elongation factor G"/>
    <property type="match status" value="1"/>
</dbReference>
<dbReference type="FunFam" id="3.30.230.10:FF:000003">
    <property type="entry name" value="Elongation factor G"/>
    <property type="match status" value="1"/>
</dbReference>
<dbReference type="FunFam" id="3.30.70.240:FF:000001">
    <property type="entry name" value="Elongation factor G"/>
    <property type="match status" value="1"/>
</dbReference>
<dbReference type="FunFam" id="3.30.70.870:FF:000001">
    <property type="entry name" value="Elongation factor G"/>
    <property type="match status" value="1"/>
</dbReference>
<dbReference type="FunFam" id="3.40.50.300:FF:000029">
    <property type="entry name" value="Elongation factor G"/>
    <property type="match status" value="1"/>
</dbReference>
<dbReference type="Gene3D" id="3.30.230.10">
    <property type="match status" value="1"/>
</dbReference>
<dbReference type="Gene3D" id="3.30.70.240">
    <property type="match status" value="1"/>
</dbReference>
<dbReference type="Gene3D" id="3.30.70.870">
    <property type="entry name" value="Elongation Factor G (Translational Gtpase), domain 3"/>
    <property type="match status" value="1"/>
</dbReference>
<dbReference type="Gene3D" id="3.40.50.300">
    <property type="entry name" value="P-loop containing nucleotide triphosphate hydrolases"/>
    <property type="match status" value="1"/>
</dbReference>
<dbReference type="Gene3D" id="2.40.30.10">
    <property type="entry name" value="Translation factors"/>
    <property type="match status" value="1"/>
</dbReference>
<dbReference type="HAMAP" id="MF_00054_B">
    <property type="entry name" value="EF_G_EF_2_B"/>
    <property type="match status" value="1"/>
</dbReference>
<dbReference type="InterPro" id="IPR041095">
    <property type="entry name" value="EFG_II"/>
</dbReference>
<dbReference type="InterPro" id="IPR009022">
    <property type="entry name" value="EFG_III"/>
</dbReference>
<dbReference type="InterPro" id="IPR035647">
    <property type="entry name" value="EFG_III/V"/>
</dbReference>
<dbReference type="InterPro" id="IPR047872">
    <property type="entry name" value="EFG_IV"/>
</dbReference>
<dbReference type="InterPro" id="IPR035649">
    <property type="entry name" value="EFG_V"/>
</dbReference>
<dbReference type="InterPro" id="IPR000640">
    <property type="entry name" value="EFG_V-like"/>
</dbReference>
<dbReference type="InterPro" id="IPR004161">
    <property type="entry name" value="EFTu-like_2"/>
</dbReference>
<dbReference type="InterPro" id="IPR031157">
    <property type="entry name" value="G_TR_CS"/>
</dbReference>
<dbReference type="InterPro" id="IPR027417">
    <property type="entry name" value="P-loop_NTPase"/>
</dbReference>
<dbReference type="InterPro" id="IPR020568">
    <property type="entry name" value="Ribosomal_Su5_D2-typ_SF"/>
</dbReference>
<dbReference type="InterPro" id="IPR014721">
    <property type="entry name" value="Ribsml_uS5_D2-typ_fold_subgr"/>
</dbReference>
<dbReference type="InterPro" id="IPR005225">
    <property type="entry name" value="Small_GTP-bd"/>
</dbReference>
<dbReference type="InterPro" id="IPR000795">
    <property type="entry name" value="T_Tr_GTP-bd_dom"/>
</dbReference>
<dbReference type="InterPro" id="IPR009000">
    <property type="entry name" value="Transl_B-barrel_sf"/>
</dbReference>
<dbReference type="InterPro" id="IPR004540">
    <property type="entry name" value="Transl_elong_EFG/EF2"/>
</dbReference>
<dbReference type="InterPro" id="IPR005517">
    <property type="entry name" value="Transl_elong_EFG/EF2_IV"/>
</dbReference>
<dbReference type="NCBIfam" id="TIGR00484">
    <property type="entry name" value="EF-G"/>
    <property type="match status" value="1"/>
</dbReference>
<dbReference type="NCBIfam" id="NF009381">
    <property type="entry name" value="PRK12740.1-5"/>
    <property type="match status" value="1"/>
</dbReference>
<dbReference type="NCBIfam" id="TIGR00231">
    <property type="entry name" value="small_GTP"/>
    <property type="match status" value="1"/>
</dbReference>
<dbReference type="PANTHER" id="PTHR43261:SF1">
    <property type="entry name" value="RIBOSOME-RELEASING FACTOR 2, MITOCHONDRIAL"/>
    <property type="match status" value="1"/>
</dbReference>
<dbReference type="PANTHER" id="PTHR43261">
    <property type="entry name" value="TRANSLATION ELONGATION FACTOR G-RELATED"/>
    <property type="match status" value="1"/>
</dbReference>
<dbReference type="Pfam" id="PF00679">
    <property type="entry name" value="EFG_C"/>
    <property type="match status" value="1"/>
</dbReference>
<dbReference type="Pfam" id="PF14492">
    <property type="entry name" value="EFG_III"/>
    <property type="match status" value="1"/>
</dbReference>
<dbReference type="Pfam" id="PF03764">
    <property type="entry name" value="EFG_IV"/>
    <property type="match status" value="1"/>
</dbReference>
<dbReference type="Pfam" id="PF00009">
    <property type="entry name" value="GTP_EFTU"/>
    <property type="match status" value="1"/>
</dbReference>
<dbReference type="Pfam" id="PF03144">
    <property type="entry name" value="GTP_EFTU_D2"/>
    <property type="match status" value="1"/>
</dbReference>
<dbReference type="PRINTS" id="PR00315">
    <property type="entry name" value="ELONGATNFCT"/>
</dbReference>
<dbReference type="SMART" id="SM00838">
    <property type="entry name" value="EFG_C"/>
    <property type="match status" value="1"/>
</dbReference>
<dbReference type="SMART" id="SM00889">
    <property type="entry name" value="EFG_IV"/>
    <property type="match status" value="1"/>
</dbReference>
<dbReference type="SUPFAM" id="SSF54980">
    <property type="entry name" value="EF-G C-terminal domain-like"/>
    <property type="match status" value="2"/>
</dbReference>
<dbReference type="SUPFAM" id="SSF52540">
    <property type="entry name" value="P-loop containing nucleoside triphosphate hydrolases"/>
    <property type="match status" value="1"/>
</dbReference>
<dbReference type="SUPFAM" id="SSF54211">
    <property type="entry name" value="Ribosomal protein S5 domain 2-like"/>
    <property type="match status" value="1"/>
</dbReference>
<dbReference type="SUPFAM" id="SSF50447">
    <property type="entry name" value="Translation proteins"/>
    <property type="match status" value="1"/>
</dbReference>
<dbReference type="PROSITE" id="PS00301">
    <property type="entry name" value="G_TR_1"/>
    <property type="match status" value="1"/>
</dbReference>
<dbReference type="PROSITE" id="PS51722">
    <property type="entry name" value="G_TR_2"/>
    <property type="match status" value="1"/>
</dbReference>
<evidence type="ECO:0000255" key="1">
    <source>
        <dbReference type="HAMAP-Rule" id="MF_00054"/>
    </source>
</evidence>
<comment type="function">
    <text evidence="1">Catalyzes the GTP-dependent ribosomal translocation step during translation elongation. During this step, the ribosome changes from the pre-translocational (PRE) to the post-translocational (POST) state as the newly formed A-site-bound peptidyl-tRNA and P-site-bound deacylated tRNA move to the P and E sites, respectively. Catalyzes the coordinated movement of the two tRNA molecules, the mRNA and conformational changes in the ribosome.</text>
</comment>
<comment type="subcellular location">
    <subcellularLocation>
        <location evidence="1">Cytoplasm</location>
    </subcellularLocation>
</comment>
<comment type="similarity">
    <text evidence="1">Belongs to the TRAFAC class translation factor GTPase superfamily. Classic translation factor GTPase family. EF-G/EF-2 subfamily.</text>
</comment>
<reference key="1">
    <citation type="journal article" date="2007" name="Appl. Environ. Microbiol.">
        <title>Genome sequence of the cellulolytic gliding bacterium Cytophaga hutchinsonii.</title>
        <authorList>
            <person name="Xie G."/>
            <person name="Bruce D.C."/>
            <person name="Challacombe J.F."/>
            <person name="Chertkov O."/>
            <person name="Detter J.C."/>
            <person name="Gilna P."/>
            <person name="Han C.S."/>
            <person name="Lucas S."/>
            <person name="Misra M."/>
            <person name="Myers G.L."/>
            <person name="Richardson P."/>
            <person name="Tapia R."/>
            <person name="Thayer N."/>
            <person name="Thompson L.S."/>
            <person name="Brettin T.S."/>
            <person name="Henrissat B."/>
            <person name="Wilson D.B."/>
            <person name="McBride M.J."/>
        </authorList>
    </citation>
    <scope>NUCLEOTIDE SEQUENCE [LARGE SCALE GENOMIC DNA]</scope>
    <source>
        <strain>ATCC 33406 / DSM 1761 / JCM 20678 / CIP 103989 / IAM 12607 / NBRC 15051 / NCIMB 9469 / D465</strain>
    </source>
</reference>
<gene>
    <name evidence="1" type="primary">fusA</name>
    <name type="ordered locus">CHU_3164</name>
</gene>
<sequence>MARDLKFTRNIGIAAHIDAGKTTTTERILYYAGVNHKIGEVHEGGATMDWMAQEQERGITITSAATTVGWKYRDNQYHVNIIDTPGHVDFTVEVNRSLRVLDGLVFLFSAVDGVEPQSETNWRLANNYKVARLGFVNKMDRSGADFLNVCKQVKEMLGSNAVPLQLPIGSEDNFQGVVDLVNNRAIVWNEADKGMTFTEVPIPADMVDETLEYREKLLEAVADYDETLMEKFFEDPNSISETEILTALRKAVLDMKIVPMLCGSSFKNKGVQTMLDYVMELLPSPLDKDDLVGINPDTDKEVVRKPVETDPFCALAFKIATDPFVGRLCFVRSYSGLLESGSYVYNTRSGNKERISRIFQMHANKQNQIDRLHCGDIGAVVGFKDIKTGDTLCDEKNKIILESMVFPEPVIGYAIEPKTQADVDKMGVAIAKLVEEDPTLHVHTDQETGQTILRGMGELHLEIIIDRMRREFKVEINQGAPQVAYKESLTKSTEHREVFKKQSGGRGKFADIVFELSPREDDKLGLEFENKIVGGVIPKEFIPSIQKGFEEAMKNGVIAGFPVESMKVRLNHGSFHDVDSDALSFELAARQGFKEAAKNAGAKIMEPIMSVEVVTPEEYTGPVTGDLNRRRGMMKGMDSKMGAQVIKADVPLSELFGYVTDLRTISSGRATASLTFSHYEFVPANLAETIVAKVKGTAVSK</sequence>
<accession>Q11QB0</accession>